<evidence type="ECO:0000255" key="1">
    <source>
        <dbReference type="HAMAP-Rule" id="MF_01127"/>
    </source>
</evidence>
<evidence type="ECO:0000305" key="2"/>
<sequence>MEIRVFRQEDFEEVITLWERCDLLRPWNDPEMDIERKMNHDVSLFLVAEVNGEVVGTVMGGYDGHRGSAYYLGVHPEFRGRGIANALLNRLEKKLIARGCPKIQINVPEDNDMVLGMYERLGYEHADVLSLGKRLIEDEEY</sequence>
<keyword id="KW-0012">Acyltransferase</keyword>
<keyword id="KW-1185">Reference proteome</keyword>
<keyword id="KW-0808">Transferase</keyword>
<gene>
    <name evidence="1" type="primary">ypeA</name>
    <name type="ordered locus">c2968</name>
</gene>
<reference key="1">
    <citation type="journal article" date="2002" name="Proc. Natl. Acad. Sci. U.S.A.">
        <title>Extensive mosaic structure revealed by the complete genome sequence of uropathogenic Escherichia coli.</title>
        <authorList>
            <person name="Welch R.A."/>
            <person name="Burland V."/>
            <person name="Plunkett G. III"/>
            <person name="Redford P."/>
            <person name="Roesch P."/>
            <person name="Rasko D."/>
            <person name="Buckles E.L."/>
            <person name="Liou S.-R."/>
            <person name="Boutin A."/>
            <person name="Hackett J."/>
            <person name="Stroud D."/>
            <person name="Mayhew G.F."/>
            <person name="Rose D.J."/>
            <person name="Zhou S."/>
            <person name="Schwartz D.C."/>
            <person name="Perna N.T."/>
            <person name="Mobley H.L.T."/>
            <person name="Donnenberg M.S."/>
            <person name="Blattner F.R."/>
        </authorList>
    </citation>
    <scope>NUCLEOTIDE SEQUENCE [LARGE SCALE GENOMIC DNA]</scope>
    <source>
        <strain>CFT073 / ATCC 700928 / UPEC</strain>
    </source>
</reference>
<proteinExistence type="inferred from homology"/>
<protein>
    <recommendedName>
        <fullName evidence="1">Acetyltransferase YpeA</fullName>
        <ecNumber evidence="1">2.3.1.-</ecNumber>
    </recommendedName>
</protein>
<feature type="chain" id="PRO_0000074621" description="Acetyltransferase YpeA">
    <location>
        <begin position="1"/>
        <end position="141"/>
    </location>
</feature>
<feature type="domain" description="N-acetyltransferase" evidence="1">
    <location>
        <begin position="1"/>
        <end position="141"/>
    </location>
</feature>
<comment type="similarity">
    <text evidence="1">Belongs to the acetyltransferase family. YpeA subfamily.</text>
</comment>
<comment type="sequence caution" evidence="2">
    <conflict type="erroneous initiation">
        <sequence resource="EMBL-CDS" id="AAN81418"/>
    </conflict>
</comment>
<organism>
    <name type="scientific">Escherichia coli O6:H1 (strain CFT073 / ATCC 700928 / UPEC)</name>
    <dbReference type="NCBI Taxonomy" id="199310"/>
    <lineage>
        <taxon>Bacteria</taxon>
        <taxon>Pseudomonadati</taxon>
        <taxon>Pseudomonadota</taxon>
        <taxon>Gammaproteobacteria</taxon>
        <taxon>Enterobacterales</taxon>
        <taxon>Enterobacteriaceae</taxon>
        <taxon>Escherichia</taxon>
    </lineage>
</organism>
<dbReference type="EC" id="2.3.1.-" evidence="1"/>
<dbReference type="EMBL" id="AE014075">
    <property type="protein sequence ID" value="AAN81418.1"/>
    <property type="status" value="ALT_INIT"/>
    <property type="molecule type" value="Genomic_DNA"/>
</dbReference>
<dbReference type="RefSeq" id="WP_000406000.1">
    <property type="nucleotide sequence ID" value="NZ_CP051263.1"/>
</dbReference>
<dbReference type="SMR" id="P63420"/>
<dbReference type="STRING" id="199310.c2968"/>
<dbReference type="KEGG" id="ecc:c2968"/>
<dbReference type="eggNOG" id="COG0456">
    <property type="taxonomic scope" value="Bacteria"/>
</dbReference>
<dbReference type="HOGENOM" id="CLU_013985_34_1_6"/>
<dbReference type="Proteomes" id="UP000001410">
    <property type="component" value="Chromosome"/>
</dbReference>
<dbReference type="GO" id="GO:0016747">
    <property type="term" value="F:acyltransferase activity, transferring groups other than amino-acyl groups"/>
    <property type="evidence" value="ECO:0007669"/>
    <property type="project" value="UniProtKB-UniRule"/>
</dbReference>
<dbReference type="CDD" id="cd04301">
    <property type="entry name" value="NAT_SF"/>
    <property type="match status" value="1"/>
</dbReference>
<dbReference type="Gene3D" id="3.40.630.30">
    <property type="match status" value="1"/>
</dbReference>
<dbReference type="HAMAP" id="MF_01127">
    <property type="entry name" value="Acetyltransf_YpeA"/>
    <property type="match status" value="1"/>
</dbReference>
<dbReference type="InterPro" id="IPR023072">
    <property type="entry name" value="Acetyltransferase_YpeA"/>
</dbReference>
<dbReference type="InterPro" id="IPR016181">
    <property type="entry name" value="Acyl_CoA_acyltransferase"/>
</dbReference>
<dbReference type="InterPro" id="IPR050832">
    <property type="entry name" value="Bact_Acetyltransf"/>
</dbReference>
<dbReference type="InterPro" id="IPR000182">
    <property type="entry name" value="GNAT_dom"/>
</dbReference>
<dbReference type="NCBIfam" id="NF002959">
    <property type="entry name" value="PRK03624.1"/>
    <property type="match status" value="1"/>
</dbReference>
<dbReference type="PANTHER" id="PTHR43877">
    <property type="entry name" value="AMINOALKYLPHOSPHONATE N-ACETYLTRANSFERASE-RELATED-RELATED"/>
    <property type="match status" value="1"/>
</dbReference>
<dbReference type="Pfam" id="PF00583">
    <property type="entry name" value="Acetyltransf_1"/>
    <property type="match status" value="1"/>
</dbReference>
<dbReference type="SUPFAM" id="SSF55729">
    <property type="entry name" value="Acyl-CoA N-acyltransferases (Nat)"/>
    <property type="match status" value="1"/>
</dbReference>
<dbReference type="PROSITE" id="PS51186">
    <property type="entry name" value="GNAT"/>
    <property type="match status" value="1"/>
</dbReference>
<accession>P63420</accession>
<accession>Q8FFA4</accession>
<accession>Q8XBI6</accession>
<name>YPEA_ECOL6</name>